<feature type="chain" id="PRO_0000221618" description="UPF0153 protein VC_1057">
    <location>
        <begin position="1"/>
        <end position="82"/>
    </location>
</feature>
<accession>Q9KT48</accession>
<comment type="similarity">
    <text evidence="1">Belongs to the UPF0153 family.</text>
</comment>
<comment type="sequence caution" evidence="1">
    <conflict type="erroneous initiation">
        <sequence resource="EMBL-CDS" id="AAF94216"/>
    </conflict>
</comment>
<name>Y1057_VIBCH</name>
<dbReference type="EMBL" id="AE003852">
    <property type="protein sequence ID" value="AAF94216.1"/>
    <property type="status" value="ALT_INIT"/>
    <property type="molecule type" value="Genomic_DNA"/>
</dbReference>
<dbReference type="PIR" id="C82247">
    <property type="entry name" value="C82247"/>
</dbReference>
<dbReference type="RefSeq" id="NP_230702.1">
    <property type="nucleotide sequence ID" value="NC_002505.1"/>
</dbReference>
<dbReference type="RefSeq" id="WP_000340598.1">
    <property type="nucleotide sequence ID" value="NZ_LT906614.1"/>
</dbReference>
<dbReference type="SMR" id="Q9KT48"/>
<dbReference type="STRING" id="243277.VC_1057"/>
<dbReference type="DNASU" id="2614327"/>
<dbReference type="EnsemblBacteria" id="AAF94216">
    <property type="protein sequence ID" value="AAF94216"/>
    <property type="gene ID" value="VC_1057"/>
</dbReference>
<dbReference type="KEGG" id="vch:VC_1057"/>
<dbReference type="PATRIC" id="fig|243277.26.peg.1009"/>
<dbReference type="eggNOG" id="ENOG5032S46">
    <property type="taxonomic scope" value="Bacteria"/>
</dbReference>
<dbReference type="HOGENOM" id="CLU_148512_0_1_6"/>
<dbReference type="Proteomes" id="UP000000584">
    <property type="component" value="Chromosome 1"/>
</dbReference>
<dbReference type="InterPro" id="IPR005358">
    <property type="entry name" value="Puta_zinc/iron-chelating_dom"/>
</dbReference>
<dbReference type="InterPro" id="IPR052572">
    <property type="entry name" value="UPF0153_domain"/>
</dbReference>
<dbReference type="PANTHER" id="PTHR36931">
    <property type="entry name" value="UPF0153 PROTEIN YEIW"/>
    <property type="match status" value="1"/>
</dbReference>
<dbReference type="PANTHER" id="PTHR36931:SF1">
    <property type="entry name" value="UPF0153 PROTEIN YEIW"/>
    <property type="match status" value="1"/>
</dbReference>
<dbReference type="Pfam" id="PF03692">
    <property type="entry name" value="CxxCxxCC"/>
    <property type="match status" value="1"/>
</dbReference>
<sequence>MDCRLGCGACCIAPSISSPIPGMPNGKPAGVRCVQLNEDNLCQLFGRPERPKVCHDFKACPVVCGKTNQQALANLTELERLT</sequence>
<organism>
    <name type="scientific">Vibrio cholerae serotype O1 (strain ATCC 39315 / El Tor Inaba N16961)</name>
    <dbReference type="NCBI Taxonomy" id="243277"/>
    <lineage>
        <taxon>Bacteria</taxon>
        <taxon>Pseudomonadati</taxon>
        <taxon>Pseudomonadota</taxon>
        <taxon>Gammaproteobacteria</taxon>
        <taxon>Vibrionales</taxon>
        <taxon>Vibrionaceae</taxon>
        <taxon>Vibrio</taxon>
    </lineage>
</organism>
<keyword id="KW-1185">Reference proteome</keyword>
<evidence type="ECO:0000305" key="1"/>
<proteinExistence type="inferred from homology"/>
<protein>
    <recommendedName>
        <fullName>UPF0153 protein VC_1057</fullName>
    </recommendedName>
</protein>
<gene>
    <name type="ordered locus">VC_1057</name>
</gene>
<reference key="1">
    <citation type="journal article" date="2000" name="Nature">
        <title>DNA sequence of both chromosomes of the cholera pathogen Vibrio cholerae.</title>
        <authorList>
            <person name="Heidelberg J.F."/>
            <person name="Eisen J.A."/>
            <person name="Nelson W.C."/>
            <person name="Clayton R.A."/>
            <person name="Gwinn M.L."/>
            <person name="Dodson R.J."/>
            <person name="Haft D.H."/>
            <person name="Hickey E.K."/>
            <person name="Peterson J.D."/>
            <person name="Umayam L.A."/>
            <person name="Gill S.R."/>
            <person name="Nelson K.E."/>
            <person name="Read T.D."/>
            <person name="Tettelin H."/>
            <person name="Richardson D.L."/>
            <person name="Ermolaeva M.D."/>
            <person name="Vamathevan J.J."/>
            <person name="Bass S."/>
            <person name="Qin H."/>
            <person name="Dragoi I."/>
            <person name="Sellers P."/>
            <person name="McDonald L.A."/>
            <person name="Utterback T.R."/>
            <person name="Fleischmann R.D."/>
            <person name="Nierman W.C."/>
            <person name="White O."/>
            <person name="Salzberg S.L."/>
            <person name="Smith H.O."/>
            <person name="Colwell R.R."/>
            <person name="Mekalanos J.J."/>
            <person name="Venter J.C."/>
            <person name="Fraser C.M."/>
        </authorList>
    </citation>
    <scope>NUCLEOTIDE SEQUENCE [LARGE SCALE GENOMIC DNA]</scope>
    <source>
        <strain>ATCC 39315 / El Tor Inaba N16961</strain>
    </source>
</reference>